<name>MNME_LACP3</name>
<sequence length="462" mass="50157">MSASITAYDTIAAISTPPGEGAISIVRLSGETAVATANQVFKGKDLSQVKSHTIHYGHIVDPESGELIDEVMVSVMLAPKTFTREDVVEINCHGGIVATNRILQLLLGEGARMAEPGEFTKRAFLNGRIDLTEAESVMDLIRAKTDRAMQVAVNQLDGNLHTLIKRLRQEILEVLAQVEVNIDYPEYDTDEMTTKMLLEKAQTVQKAISNLLSTASQGKVLREGLATAIVGRPNVGKSSLLNHMLHEDKAIVTDVAGTTRDVLEEYVNVRGVPLKLVDTAGIHDTTDKVEKIGVERSRQAITQADLILLVLDQSEPLTDEDEQLIQATANKKRIIVLNKQDLPAQLDTTALLKLVSPDEIIKTAIPTSAGMDALDERIAKLFFGGIENSQTTVMVSNARQIGLLRQANKSLDAVIAGIHAGMPIDLVQIDMTAAWDKLGEITGESAPDELITQLFSQFCLGK</sequence>
<keyword id="KW-0963">Cytoplasm</keyword>
<keyword id="KW-0342">GTP-binding</keyword>
<keyword id="KW-0378">Hydrolase</keyword>
<keyword id="KW-0460">Magnesium</keyword>
<keyword id="KW-0479">Metal-binding</keyword>
<keyword id="KW-0547">Nucleotide-binding</keyword>
<keyword id="KW-0630">Potassium</keyword>
<keyword id="KW-1185">Reference proteome</keyword>
<keyword id="KW-0819">tRNA processing</keyword>
<evidence type="ECO:0000255" key="1">
    <source>
        <dbReference type="HAMAP-Rule" id="MF_00379"/>
    </source>
</evidence>
<gene>
    <name evidence="1" type="primary">mnmE</name>
    <name evidence="1" type="synonym">trmE</name>
    <name type="ordered locus">LSEI_2904</name>
</gene>
<accession>Q033L0</accession>
<organism>
    <name type="scientific">Lacticaseibacillus paracasei (strain ATCC 334 / BCRC 17002 / CCUG 31169 / CIP 107868 / KCTC 3260 / NRRL B-441)</name>
    <name type="common">Lactobacillus paracasei</name>
    <dbReference type="NCBI Taxonomy" id="321967"/>
    <lineage>
        <taxon>Bacteria</taxon>
        <taxon>Bacillati</taxon>
        <taxon>Bacillota</taxon>
        <taxon>Bacilli</taxon>
        <taxon>Lactobacillales</taxon>
        <taxon>Lactobacillaceae</taxon>
        <taxon>Lacticaseibacillus</taxon>
    </lineage>
</organism>
<dbReference type="EC" id="3.6.-.-" evidence="1"/>
<dbReference type="EMBL" id="CP000423">
    <property type="protein sequence ID" value="ABJ71612.1"/>
    <property type="molecule type" value="Genomic_DNA"/>
</dbReference>
<dbReference type="RefSeq" id="WP_003568424.1">
    <property type="nucleotide sequence ID" value="NC_008526.1"/>
</dbReference>
<dbReference type="RefSeq" id="YP_808054.1">
    <property type="nucleotide sequence ID" value="NC_008526.1"/>
</dbReference>
<dbReference type="SMR" id="Q033L0"/>
<dbReference type="STRING" id="321967.LSEI_2904"/>
<dbReference type="PaxDb" id="321967-LSEI_2904"/>
<dbReference type="GeneID" id="57091505"/>
<dbReference type="KEGG" id="lca:LSEI_2904"/>
<dbReference type="PATRIC" id="fig|321967.11.peg.2849"/>
<dbReference type="HOGENOM" id="CLU_019624_4_1_9"/>
<dbReference type="Proteomes" id="UP000001651">
    <property type="component" value="Chromosome"/>
</dbReference>
<dbReference type="GO" id="GO:0005829">
    <property type="term" value="C:cytosol"/>
    <property type="evidence" value="ECO:0007669"/>
    <property type="project" value="TreeGrafter"/>
</dbReference>
<dbReference type="GO" id="GO:0005525">
    <property type="term" value="F:GTP binding"/>
    <property type="evidence" value="ECO:0007669"/>
    <property type="project" value="UniProtKB-UniRule"/>
</dbReference>
<dbReference type="GO" id="GO:0003924">
    <property type="term" value="F:GTPase activity"/>
    <property type="evidence" value="ECO:0007669"/>
    <property type="project" value="UniProtKB-UniRule"/>
</dbReference>
<dbReference type="GO" id="GO:0046872">
    <property type="term" value="F:metal ion binding"/>
    <property type="evidence" value="ECO:0007669"/>
    <property type="project" value="UniProtKB-KW"/>
</dbReference>
<dbReference type="GO" id="GO:0030488">
    <property type="term" value="P:tRNA methylation"/>
    <property type="evidence" value="ECO:0007669"/>
    <property type="project" value="TreeGrafter"/>
</dbReference>
<dbReference type="GO" id="GO:0002098">
    <property type="term" value="P:tRNA wobble uridine modification"/>
    <property type="evidence" value="ECO:0007669"/>
    <property type="project" value="TreeGrafter"/>
</dbReference>
<dbReference type="CDD" id="cd04164">
    <property type="entry name" value="trmE"/>
    <property type="match status" value="1"/>
</dbReference>
<dbReference type="CDD" id="cd14858">
    <property type="entry name" value="TrmE_N"/>
    <property type="match status" value="1"/>
</dbReference>
<dbReference type="FunFam" id="3.30.1360.120:FF:000003">
    <property type="entry name" value="tRNA modification GTPase MnmE"/>
    <property type="match status" value="1"/>
</dbReference>
<dbReference type="FunFam" id="3.40.50.300:FF:000494">
    <property type="entry name" value="tRNA modification GTPase MnmE"/>
    <property type="match status" value="1"/>
</dbReference>
<dbReference type="Gene3D" id="3.40.50.300">
    <property type="entry name" value="P-loop containing nucleotide triphosphate hydrolases"/>
    <property type="match status" value="1"/>
</dbReference>
<dbReference type="Gene3D" id="3.30.1360.120">
    <property type="entry name" value="Probable tRNA modification gtpase trme, domain 1"/>
    <property type="match status" value="1"/>
</dbReference>
<dbReference type="Gene3D" id="1.20.120.430">
    <property type="entry name" value="tRNA modification GTPase MnmE domain 2"/>
    <property type="match status" value="1"/>
</dbReference>
<dbReference type="HAMAP" id="MF_00379">
    <property type="entry name" value="GTPase_MnmE"/>
    <property type="match status" value="1"/>
</dbReference>
<dbReference type="InterPro" id="IPR031168">
    <property type="entry name" value="G_TrmE"/>
</dbReference>
<dbReference type="InterPro" id="IPR006073">
    <property type="entry name" value="GTP-bd"/>
</dbReference>
<dbReference type="InterPro" id="IPR018948">
    <property type="entry name" value="GTP-bd_TrmE_N"/>
</dbReference>
<dbReference type="InterPro" id="IPR004520">
    <property type="entry name" value="GTPase_MnmE"/>
</dbReference>
<dbReference type="InterPro" id="IPR027368">
    <property type="entry name" value="MnmE_dom2"/>
</dbReference>
<dbReference type="InterPro" id="IPR025867">
    <property type="entry name" value="MnmE_helical"/>
</dbReference>
<dbReference type="InterPro" id="IPR027417">
    <property type="entry name" value="P-loop_NTPase"/>
</dbReference>
<dbReference type="InterPro" id="IPR005225">
    <property type="entry name" value="Small_GTP-bd"/>
</dbReference>
<dbReference type="InterPro" id="IPR027266">
    <property type="entry name" value="TrmE/GcvT_dom1"/>
</dbReference>
<dbReference type="NCBIfam" id="TIGR00450">
    <property type="entry name" value="mnmE_trmE_thdF"/>
    <property type="match status" value="1"/>
</dbReference>
<dbReference type="NCBIfam" id="NF003661">
    <property type="entry name" value="PRK05291.1-3"/>
    <property type="match status" value="1"/>
</dbReference>
<dbReference type="NCBIfam" id="TIGR00231">
    <property type="entry name" value="small_GTP"/>
    <property type="match status" value="1"/>
</dbReference>
<dbReference type="PANTHER" id="PTHR42714">
    <property type="entry name" value="TRNA MODIFICATION GTPASE GTPBP3"/>
    <property type="match status" value="1"/>
</dbReference>
<dbReference type="PANTHER" id="PTHR42714:SF2">
    <property type="entry name" value="TRNA MODIFICATION GTPASE GTPBP3, MITOCHONDRIAL"/>
    <property type="match status" value="1"/>
</dbReference>
<dbReference type="Pfam" id="PF01926">
    <property type="entry name" value="MMR_HSR1"/>
    <property type="match status" value="1"/>
</dbReference>
<dbReference type="Pfam" id="PF12631">
    <property type="entry name" value="MnmE_helical"/>
    <property type="match status" value="1"/>
</dbReference>
<dbReference type="Pfam" id="PF10396">
    <property type="entry name" value="TrmE_N"/>
    <property type="match status" value="1"/>
</dbReference>
<dbReference type="SUPFAM" id="SSF52540">
    <property type="entry name" value="P-loop containing nucleoside triphosphate hydrolases"/>
    <property type="match status" value="1"/>
</dbReference>
<dbReference type="SUPFAM" id="SSF116878">
    <property type="entry name" value="TrmE connector domain"/>
    <property type="match status" value="1"/>
</dbReference>
<dbReference type="PROSITE" id="PS51709">
    <property type="entry name" value="G_TRME"/>
    <property type="match status" value="1"/>
</dbReference>
<comment type="function">
    <text evidence="1">Exhibits a very high intrinsic GTPase hydrolysis rate. Involved in the addition of a carboxymethylaminomethyl (cmnm) group at the wobble position (U34) of certain tRNAs, forming tRNA-cmnm(5)s(2)U34.</text>
</comment>
<comment type="cofactor">
    <cofactor evidence="1">
        <name>K(+)</name>
        <dbReference type="ChEBI" id="CHEBI:29103"/>
    </cofactor>
    <text evidence="1">Binds 1 potassium ion per subunit.</text>
</comment>
<comment type="subunit">
    <text evidence="1">Homodimer. Heterotetramer of two MnmE and two MnmG subunits.</text>
</comment>
<comment type="subcellular location">
    <subcellularLocation>
        <location evidence="1">Cytoplasm</location>
    </subcellularLocation>
</comment>
<comment type="similarity">
    <text evidence="1">Belongs to the TRAFAC class TrmE-Era-EngA-EngB-Septin-like GTPase superfamily. TrmE GTPase family.</text>
</comment>
<reference key="1">
    <citation type="journal article" date="2006" name="Proc. Natl. Acad. Sci. U.S.A.">
        <title>Comparative genomics of the lactic acid bacteria.</title>
        <authorList>
            <person name="Makarova K.S."/>
            <person name="Slesarev A."/>
            <person name="Wolf Y.I."/>
            <person name="Sorokin A."/>
            <person name="Mirkin B."/>
            <person name="Koonin E.V."/>
            <person name="Pavlov A."/>
            <person name="Pavlova N."/>
            <person name="Karamychev V."/>
            <person name="Polouchine N."/>
            <person name="Shakhova V."/>
            <person name="Grigoriev I."/>
            <person name="Lou Y."/>
            <person name="Rohksar D."/>
            <person name="Lucas S."/>
            <person name="Huang K."/>
            <person name="Goodstein D.M."/>
            <person name="Hawkins T."/>
            <person name="Plengvidhya V."/>
            <person name="Welker D."/>
            <person name="Hughes J."/>
            <person name="Goh Y."/>
            <person name="Benson A."/>
            <person name="Baldwin K."/>
            <person name="Lee J.-H."/>
            <person name="Diaz-Muniz I."/>
            <person name="Dosti B."/>
            <person name="Smeianov V."/>
            <person name="Wechter W."/>
            <person name="Barabote R."/>
            <person name="Lorca G."/>
            <person name="Altermann E."/>
            <person name="Barrangou R."/>
            <person name="Ganesan B."/>
            <person name="Xie Y."/>
            <person name="Rawsthorne H."/>
            <person name="Tamir D."/>
            <person name="Parker C."/>
            <person name="Breidt F."/>
            <person name="Broadbent J.R."/>
            <person name="Hutkins R."/>
            <person name="O'Sullivan D."/>
            <person name="Steele J."/>
            <person name="Unlu G."/>
            <person name="Saier M.H. Jr."/>
            <person name="Klaenhammer T."/>
            <person name="Richardson P."/>
            <person name="Kozyavkin S."/>
            <person name="Weimer B.C."/>
            <person name="Mills D.A."/>
        </authorList>
    </citation>
    <scope>NUCLEOTIDE SEQUENCE [LARGE SCALE GENOMIC DNA]</scope>
    <source>
        <strain>ATCC 334 / BCRC 17002 / CCUG 31169 / CIP 107868 / KCTC 3260 / NRRL B-441</strain>
    </source>
</reference>
<proteinExistence type="inferred from homology"/>
<protein>
    <recommendedName>
        <fullName evidence="1">tRNA modification GTPase MnmE</fullName>
        <ecNumber evidence="1">3.6.-.-</ecNumber>
    </recommendedName>
</protein>
<feature type="chain" id="PRO_1000060047" description="tRNA modification GTPase MnmE">
    <location>
        <begin position="1"/>
        <end position="462"/>
    </location>
</feature>
<feature type="domain" description="TrmE-type G">
    <location>
        <begin position="224"/>
        <end position="383"/>
    </location>
</feature>
<feature type="binding site" evidence="1">
    <location>
        <position position="27"/>
    </location>
    <ligand>
        <name>(6S)-5-formyl-5,6,7,8-tetrahydrofolate</name>
        <dbReference type="ChEBI" id="CHEBI:57457"/>
    </ligand>
</feature>
<feature type="binding site" evidence="1">
    <location>
        <position position="89"/>
    </location>
    <ligand>
        <name>(6S)-5-formyl-5,6,7,8-tetrahydrofolate</name>
        <dbReference type="ChEBI" id="CHEBI:57457"/>
    </ligand>
</feature>
<feature type="binding site" evidence="1">
    <location>
        <position position="128"/>
    </location>
    <ligand>
        <name>(6S)-5-formyl-5,6,7,8-tetrahydrofolate</name>
        <dbReference type="ChEBI" id="CHEBI:57457"/>
    </ligand>
</feature>
<feature type="binding site" evidence="1">
    <location>
        <begin position="234"/>
        <end position="239"/>
    </location>
    <ligand>
        <name>GTP</name>
        <dbReference type="ChEBI" id="CHEBI:37565"/>
    </ligand>
</feature>
<feature type="binding site" evidence="1">
    <location>
        <position position="234"/>
    </location>
    <ligand>
        <name>K(+)</name>
        <dbReference type="ChEBI" id="CHEBI:29103"/>
    </ligand>
</feature>
<feature type="binding site" evidence="1">
    <location>
        <position position="238"/>
    </location>
    <ligand>
        <name>Mg(2+)</name>
        <dbReference type="ChEBI" id="CHEBI:18420"/>
    </ligand>
</feature>
<feature type="binding site" evidence="1">
    <location>
        <begin position="253"/>
        <end position="259"/>
    </location>
    <ligand>
        <name>GTP</name>
        <dbReference type="ChEBI" id="CHEBI:37565"/>
    </ligand>
</feature>
<feature type="binding site" evidence="1">
    <location>
        <position position="253"/>
    </location>
    <ligand>
        <name>K(+)</name>
        <dbReference type="ChEBI" id="CHEBI:29103"/>
    </ligand>
</feature>
<feature type="binding site" evidence="1">
    <location>
        <position position="255"/>
    </location>
    <ligand>
        <name>K(+)</name>
        <dbReference type="ChEBI" id="CHEBI:29103"/>
    </ligand>
</feature>
<feature type="binding site" evidence="1">
    <location>
        <position position="258"/>
    </location>
    <ligand>
        <name>K(+)</name>
        <dbReference type="ChEBI" id="CHEBI:29103"/>
    </ligand>
</feature>
<feature type="binding site" evidence="1">
    <location>
        <position position="259"/>
    </location>
    <ligand>
        <name>Mg(2+)</name>
        <dbReference type="ChEBI" id="CHEBI:18420"/>
    </ligand>
</feature>
<feature type="binding site" evidence="1">
    <location>
        <begin position="278"/>
        <end position="281"/>
    </location>
    <ligand>
        <name>GTP</name>
        <dbReference type="ChEBI" id="CHEBI:37565"/>
    </ligand>
</feature>
<feature type="binding site" evidence="1">
    <location>
        <position position="462"/>
    </location>
    <ligand>
        <name>(6S)-5-formyl-5,6,7,8-tetrahydrofolate</name>
        <dbReference type="ChEBI" id="CHEBI:57457"/>
    </ligand>
</feature>